<gene>
    <name evidence="1" type="primary">nusB</name>
    <name type="ordered locus">SYNPCC7002_A0931</name>
</gene>
<dbReference type="EMBL" id="CP000951">
    <property type="protein sequence ID" value="ACA98935.1"/>
    <property type="molecule type" value="Genomic_DNA"/>
</dbReference>
<dbReference type="RefSeq" id="WP_012306559.1">
    <property type="nucleotide sequence ID" value="NZ_JAHHPU010000001.1"/>
</dbReference>
<dbReference type="SMR" id="B1XIZ3"/>
<dbReference type="STRING" id="32049.SYNPCC7002_A0931"/>
<dbReference type="KEGG" id="syp:SYNPCC7002_A0931"/>
<dbReference type="eggNOG" id="COG0781">
    <property type="taxonomic scope" value="Bacteria"/>
</dbReference>
<dbReference type="HOGENOM" id="CLU_087843_0_0_3"/>
<dbReference type="Proteomes" id="UP000001688">
    <property type="component" value="Chromosome"/>
</dbReference>
<dbReference type="GO" id="GO:0005829">
    <property type="term" value="C:cytosol"/>
    <property type="evidence" value="ECO:0007669"/>
    <property type="project" value="TreeGrafter"/>
</dbReference>
<dbReference type="GO" id="GO:0003723">
    <property type="term" value="F:RNA binding"/>
    <property type="evidence" value="ECO:0007669"/>
    <property type="project" value="UniProtKB-UniRule"/>
</dbReference>
<dbReference type="GO" id="GO:0006353">
    <property type="term" value="P:DNA-templated transcription termination"/>
    <property type="evidence" value="ECO:0007669"/>
    <property type="project" value="UniProtKB-UniRule"/>
</dbReference>
<dbReference type="GO" id="GO:0031564">
    <property type="term" value="P:transcription antitermination"/>
    <property type="evidence" value="ECO:0007669"/>
    <property type="project" value="UniProtKB-KW"/>
</dbReference>
<dbReference type="Gene3D" id="1.10.940.10">
    <property type="entry name" value="NusB-like"/>
    <property type="match status" value="1"/>
</dbReference>
<dbReference type="HAMAP" id="MF_00073">
    <property type="entry name" value="NusB"/>
    <property type="match status" value="1"/>
</dbReference>
<dbReference type="InterPro" id="IPR035926">
    <property type="entry name" value="NusB-like_sf"/>
</dbReference>
<dbReference type="InterPro" id="IPR011605">
    <property type="entry name" value="NusB_fam"/>
</dbReference>
<dbReference type="InterPro" id="IPR006027">
    <property type="entry name" value="NusB_RsmB_TIM44"/>
</dbReference>
<dbReference type="NCBIfam" id="TIGR01951">
    <property type="entry name" value="nusB"/>
    <property type="match status" value="1"/>
</dbReference>
<dbReference type="PANTHER" id="PTHR11078:SF3">
    <property type="entry name" value="ANTITERMINATION NUSB DOMAIN-CONTAINING PROTEIN"/>
    <property type="match status" value="1"/>
</dbReference>
<dbReference type="PANTHER" id="PTHR11078">
    <property type="entry name" value="N UTILIZATION SUBSTANCE PROTEIN B-RELATED"/>
    <property type="match status" value="1"/>
</dbReference>
<dbReference type="Pfam" id="PF01029">
    <property type="entry name" value="NusB"/>
    <property type="match status" value="1"/>
</dbReference>
<dbReference type="SUPFAM" id="SSF48013">
    <property type="entry name" value="NusB-like"/>
    <property type="match status" value="1"/>
</dbReference>
<feature type="chain" id="PRO_1000192465" description="Transcription antitermination protein NusB">
    <location>
        <begin position="1"/>
        <end position="213"/>
    </location>
</feature>
<accession>B1XIZ3</accession>
<name>NUSB_PICP2</name>
<sequence length="213" mass="24306">MPARKQPRSVAREIALLSLSQIKGKPDKLEAVELDELMLAAVRTLSSEIHDILEDAASEVSRAEEQLLRSETLAVNVKSARTMAADALELTRAAINRLGHVVELPEFLQLTRQHEVRNFALEILTTLRRRNDQIKEVIDGSLVDWQYHRLPRLDRDILRIAVAEILFLETPYKVAINEAVELAKRYSDEDGHRFINGVLRRVSDRLRAEDSLK</sequence>
<reference key="1">
    <citation type="submission" date="2008-02" db="EMBL/GenBank/DDBJ databases">
        <title>Complete sequence of Synechococcus sp. PCC 7002.</title>
        <authorList>
            <person name="Li T."/>
            <person name="Zhao J."/>
            <person name="Zhao C."/>
            <person name="Liu Z."/>
            <person name="Zhao F."/>
            <person name="Marquardt J."/>
            <person name="Nomura C.T."/>
            <person name="Persson S."/>
            <person name="Detter J.C."/>
            <person name="Richardson P.M."/>
            <person name="Lanz C."/>
            <person name="Schuster S.C."/>
            <person name="Wang J."/>
            <person name="Li S."/>
            <person name="Huang X."/>
            <person name="Cai T."/>
            <person name="Yu Z."/>
            <person name="Luo J."/>
            <person name="Zhao J."/>
            <person name="Bryant D.A."/>
        </authorList>
    </citation>
    <scope>NUCLEOTIDE SEQUENCE [LARGE SCALE GENOMIC DNA]</scope>
    <source>
        <strain>ATCC 27264 / PCC 7002 / PR-6</strain>
    </source>
</reference>
<organism>
    <name type="scientific">Picosynechococcus sp. (strain ATCC 27264 / PCC 7002 / PR-6)</name>
    <name type="common">Agmenellum quadruplicatum</name>
    <dbReference type="NCBI Taxonomy" id="32049"/>
    <lineage>
        <taxon>Bacteria</taxon>
        <taxon>Bacillati</taxon>
        <taxon>Cyanobacteriota</taxon>
        <taxon>Cyanophyceae</taxon>
        <taxon>Oscillatoriophycideae</taxon>
        <taxon>Chroococcales</taxon>
        <taxon>Geminocystaceae</taxon>
        <taxon>Picosynechococcus</taxon>
    </lineage>
</organism>
<evidence type="ECO:0000255" key="1">
    <source>
        <dbReference type="HAMAP-Rule" id="MF_00073"/>
    </source>
</evidence>
<proteinExistence type="inferred from homology"/>
<comment type="function">
    <text evidence="1">Involved in transcription antitermination. Required for transcription of ribosomal RNA (rRNA) genes. Binds specifically to the boxA antiterminator sequence of the ribosomal RNA (rrn) operons.</text>
</comment>
<comment type="similarity">
    <text evidence="1">Belongs to the NusB family.</text>
</comment>
<keyword id="KW-1185">Reference proteome</keyword>
<keyword id="KW-0694">RNA-binding</keyword>
<keyword id="KW-0804">Transcription</keyword>
<keyword id="KW-0889">Transcription antitermination</keyword>
<keyword id="KW-0805">Transcription regulation</keyword>
<protein>
    <recommendedName>
        <fullName evidence="1">Transcription antitermination protein NusB</fullName>
    </recommendedName>
    <alternativeName>
        <fullName evidence="1">Antitermination factor NusB</fullName>
    </alternativeName>
</protein>